<evidence type="ECO:0000255" key="1">
    <source>
        <dbReference type="HAMAP-Rule" id="MF_00636"/>
    </source>
</evidence>
<keyword id="KW-0067">ATP-binding</keyword>
<keyword id="KW-0342">GTP-binding</keyword>
<keyword id="KW-0547">Nucleotide-binding</keyword>
<keyword id="KW-1185">Reference proteome</keyword>
<name>Y634_XYLFT</name>
<protein>
    <recommendedName>
        <fullName evidence="1">Nucleotide-binding protein PD_0634</fullName>
    </recommendedName>
</protein>
<proteinExistence type="inferred from homology"/>
<accession>Q87DP8</accession>
<gene>
    <name type="ordered locus">PD_0634</name>
</gene>
<comment type="function">
    <text evidence="1">Displays ATPase and GTPase activities.</text>
</comment>
<comment type="similarity">
    <text evidence="1">Belongs to the RapZ-like family.</text>
</comment>
<organism>
    <name type="scientific">Xylella fastidiosa (strain Temecula1 / ATCC 700964)</name>
    <dbReference type="NCBI Taxonomy" id="183190"/>
    <lineage>
        <taxon>Bacteria</taxon>
        <taxon>Pseudomonadati</taxon>
        <taxon>Pseudomonadota</taxon>
        <taxon>Gammaproteobacteria</taxon>
        <taxon>Lysobacterales</taxon>
        <taxon>Lysobacteraceae</taxon>
        <taxon>Xylella</taxon>
    </lineage>
</organism>
<feature type="chain" id="PRO_0000107793" description="Nucleotide-binding protein PD_0634">
    <location>
        <begin position="1"/>
        <end position="290"/>
    </location>
</feature>
<feature type="binding site" evidence="1">
    <location>
        <begin position="13"/>
        <end position="20"/>
    </location>
    <ligand>
        <name>ATP</name>
        <dbReference type="ChEBI" id="CHEBI:30616"/>
    </ligand>
</feature>
<feature type="binding site" evidence="1">
    <location>
        <begin position="65"/>
        <end position="68"/>
    </location>
    <ligand>
        <name>GTP</name>
        <dbReference type="ChEBI" id="CHEBI:37565"/>
    </ligand>
</feature>
<sequence>MKPPEHSLIIISGLSGSGKSVALKTFEDLDYYCSDNLPVELLPHFLRRRLRVAELSDQRIAIGIDIRSGSNISELDQWRHTAKHYNIKAHLLFFDASNETLLKRYADTRRRHPLSHLGLSLPEAIALERELTAPLREAAEAVIDTSTFNVHQLRRHVVTEFALTHSDKLSLLFESFAYKRGVPTEADFVFDARILPNPHWEPELRSLTGRDSNVRDYMEQQPDVILYLTQITEFLDTWLARLQADTRSYVTVAFGCTGGKHRSVYLAEQMARHAREKGWSEVATFHRELE</sequence>
<dbReference type="EMBL" id="AE009442">
    <property type="protein sequence ID" value="AAO28505.1"/>
    <property type="molecule type" value="Genomic_DNA"/>
</dbReference>
<dbReference type="SMR" id="Q87DP8"/>
<dbReference type="KEGG" id="xft:PD_0634"/>
<dbReference type="HOGENOM" id="CLU_059558_1_1_6"/>
<dbReference type="Proteomes" id="UP000002516">
    <property type="component" value="Chromosome"/>
</dbReference>
<dbReference type="GO" id="GO:0005524">
    <property type="term" value="F:ATP binding"/>
    <property type="evidence" value="ECO:0007669"/>
    <property type="project" value="UniProtKB-UniRule"/>
</dbReference>
<dbReference type="GO" id="GO:0005525">
    <property type="term" value="F:GTP binding"/>
    <property type="evidence" value="ECO:0007669"/>
    <property type="project" value="UniProtKB-UniRule"/>
</dbReference>
<dbReference type="Gene3D" id="3.40.50.300">
    <property type="entry name" value="P-loop containing nucleotide triphosphate hydrolases"/>
    <property type="match status" value="1"/>
</dbReference>
<dbReference type="HAMAP" id="MF_00636">
    <property type="entry name" value="RapZ_like"/>
    <property type="match status" value="1"/>
</dbReference>
<dbReference type="InterPro" id="IPR027417">
    <property type="entry name" value="P-loop_NTPase"/>
</dbReference>
<dbReference type="InterPro" id="IPR005337">
    <property type="entry name" value="RapZ-like"/>
</dbReference>
<dbReference type="InterPro" id="IPR053930">
    <property type="entry name" value="RapZ-like_N"/>
</dbReference>
<dbReference type="InterPro" id="IPR053931">
    <property type="entry name" value="RapZ_C"/>
</dbReference>
<dbReference type="NCBIfam" id="NF003828">
    <property type="entry name" value="PRK05416.1"/>
    <property type="match status" value="1"/>
</dbReference>
<dbReference type="PANTHER" id="PTHR30448">
    <property type="entry name" value="RNASE ADAPTER PROTEIN RAPZ"/>
    <property type="match status" value="1"/>
</dbReference>
<dbReference type="PANTHER" id="PTHR30448:SF0">
    <property type="entry name" value="RNASE ADAPTER PROTEIN RAPZ"/>
    <property type="match status" value="1"/>
</dbReference>
<dbReference type="Pfam" id="PF22740">
    <property type="entry name" value="PapZ_C"/>
    <property type="match status" value="1"/>
</dbReference>
<dbReference type="Pfam" id="PF03668">
    <property type="entry name" value="RapZ-like_N"/>
    <property type="match status" value="1"/>
</dbReference>
<dbReference type="PIRSF" id="PIRSF005052">
    <property type="entry name" value="P-loopkin"/>
    <property type="match status" value="1"/>
</dbReference>
<dbReference type="SUPFAM" id="SSF52540">
    <property type="entry name" value="P-loop containing nucleoside triphosphate hydrolases"/>
    <property type="match status" value="1"/>
</dbReference>
<reference key="1">
    <citation type="journal article" date="2003" name="J. Bacteriol.">
        <title>Comparative analyses of the complete genome sequences of Pierce's disease and citrus variegated chlorosis strains of Xylella fastidiosa.</title>
        <authorList>
            <person name="Van Sluys M.A."/>
            <person name="de Oliveira M.C."/>
            <person name="Monteiro-Vitorello C.B."/>
            <person name="Miyaki C.Y."/>
            <person name="Furlan L.R."/>
            <person name="Camargo L.E.A."/>
            <person name="da Silva A.C.R."/>
            <person name="Moon D.H."/>
            <person name="Takita M.A."/>
            <person name="Lemos E.G.M."/>
            <person name="Machado M.A."/>
            <person name="Ferro M.I.T."/>
            <person name="da Silva F.R."/>
            <person name="Goldman M.H.S."/>
            <person name="Goldman G.H."/>
            <person name="Lemos M.V.F."/>
            <person name="El-Dorry H."/>
            <person name="Tsai S.M."/>
            <person name="Carrer H."/>
            <person name="Carraro D.M."/>
            <person name="de Oliveira R.C."/>
            <person name="Nunes L.R."/>
            <person name="Siqueira W.J."/>
            <person name="Coutinho L.L."/>
            <person name="Kimura E.T."/>
            <person name="Ferro E.S."/>
            <person name="Harakava R."/>
            <person name="Kuramae E.E."/>
            <person name="Marino C.L."/>
            <person name="Giglioti E."/>
            <person name="Abreu I.L."/>
            <person name="Alves L.M.C."/>
            <person name="do Amaral A.M."/>
            <person name="Baia G.S."/>
            <person name="Blanco S.R."/>
            <person name="Brito M.S."/>
            <person name="Cannavan F.S."/>
            <person name="Celestino A.V."/>
            <person name="da Cunha A.F."/>
            <person name="Fenille R.C."/>
            <person name="Ferro J.A."/>
            <person name="Formighieri E.F."/>
            <person name="Kishi L.T."/>
            <person name="Leoni S.G."/>
            <person name="Oliveira A.R."/>
            <person name="Rosa V.E. Jr."/>
            <person name="Sassaki F.T."/>
            <person name="Sena J.A.D."/>
            <person name="de Souza A.A."/>
            <person name="Truffi D."/>
            <person name="Tsukumo F."/>
            <person name="Yanai G.M."/>
            <person name="Zaros L.G."/>
            <person name="Civerolo E.L."/>
            <person name="Simpson A.J.G."/>
            <person name="Almeida N.F. Jr."/>
            <person name="Setubal J.C."/>
            <person name="Kitajima J.P."/>
        </authorList>
    </citation>
    <scope>NUCLEOTIDE SEQUENCE [LARGE SCALE GENOMIC DNA]</scope>
    <source>
        <strain>Temecula1 / ATCC 700964</strain>
    </source>
</reference>